<feature type="chain" id="PRO_0000130764" description="Large ribosomal subunit protein uL24c">
    <location>
        <begin position="1"/>
        <end position="95"/>
    </location>
</feature>
<protein>
    <recommendedName>
        <fullName evidence="2">Large ribosomal subunit protein uL24c</fullName>
    </recommendedName>
    <alternativeName>
        <fullName>50S ribosomal protein L24, chloroplastic</fullName>
    </alternativeName>
</protein>
<sequence length="95" mass="10529">MKSSLIKNTVNKKVKFKKGDLVQILSGSDKKKTGEIIAIIHKTSKVIVKGINLKVEASKDLSKKVETGEITKFEAPIHSSNVMLFSQKNNISSRF</sequence>
<proteinExistence type="inferred from homology"/>
<gene>
    <name type="primary">rpl24</name>
</gene>
<dbReference type="EMBL" id="U38804">
    <property type="protein sequence ID" value="AAC08189.1"/>
    <property type="molecule type" value="Genomic_DNA"/>
</dbReference>
<dbReference type="PIR" id="S73224">
    <property type="entry name" value="S73224"/>
</dbReference>
<dbReference type="RefSeq" id="NP_053913.1">
    <property type="nucleotide sequence ID" value="NC_000925.1"/>
</dbReference>
<dbReference type="SMR" id="P51303"/>
<dbReference type="GeneID" id="809932"/>
<dbReference type="GO" id="GO:0009507">
    <property type="term" value="C:chloroplast"/>
    <property type="evidence" value="ECO:0007669"/>
    <property type="project" value="UniProtKB-SubCell"/>
</dbReference>
<dbReference type="GO" id="GO:1990904">
    <property type="term" value="C:ribonucleoprotein complex"/>
    <property type="evidence" value="ECO:0007669"/>
    <property type="project" value="UniProtKB-KW"/>
</dbReference>
<dbReference type="GO" id="GO:0005840">
    <property type="term" value="C:ribosome"/>
    <property type="evidence" value="ECO:0007669"/>
    <property type="project" value="UniProtKB-KW"/>
</dbReference>
<dbReference type="GO" id="GO:0019843">
    <property type="term" value="F:rRNA binding"/>
    <property type="evidence" value="ECO:0007669"/>
    <property type="project" value="UniProtKB-UniRule"/>
</dbReference>
<dbReference type="GO" id="GO:0003735">
    <property type="term" value="F:structural constituent of ribosome"/>
    <property type="evidence" value="ECO:0007669"/>
    <property type="project" value="InterPro"/>
</dbReference>
<dbReference type="GO" id="GO:0006412">
    <property type="term" value="P:translation"/>
    <property type="evidence" value="ECO:0007669"/>
    <property type="project" value="UniProtKB-UniRule"/>
</dbReference>
<dbReference type="CDD" id="cd06089">
    <property type="entry name" value="KOW_RPL26"/>
    <property type="match status" value="1"/>
</dbReference>
<dbReference type="Gene3D" id="2.30.30.30">
    <property type="match status" value="1"/>
</dbReference>
<dbReference type="HAMAP" id="MF_01326_B">
    <property type="entry name" value="Ribosomal_uL24_B"/>
    <property type="match status" value="1"/>
</dbReference>
<dbReference type="InterPro" id="IPR005824">
    <property type="entry name" value="KOW"/>
</dbReference>
<dbReference type="InterPro" id="IPR014722">
    <property type="entry name" value="Rib_uL2_dom2"/>
</dbReference>
<dbReference type="InterPro" id="IPR003256">
    <property type="entry name" value="Ribosomal_uL24"/>
</dbReference>
<dbReference type="InterPro" id="IPR005825">
    <property type="entry name" value="Ribosomal_uL24_CS"/>
</dbReference>
<dbReference type="InterPro" id="IPR041988">
    <property type="entry name" value="Ribosomal_uL24_KOW"/>
</dbReference>
<dbReference type="InterPro" id="IPR008991">
    <property type="entry name" value="Translation_prot_SH3-like_sf"/>
</dbReference>
<dbReference type="NCBIfam" id="TIGR01079">
    <property type="entry name" value="rplX_bact"/>
    <property type="match status" value="1"/>
</dbReference>
<dbReference type="PANTHER" id="PTHR12903">
    <property type="entry name" value="MITOCHONDRIAL RIBOSOMAL PROTEIN L24"/>
    <property type="match status" value="1"/>
</dbReference>
<dbReference type="Pfam" id="PF17136">
    <property type="entry name" value="ribosomal_L24"/>
    <property type="match status" value="1"/>
</dbReference>
<dbReference type="SMART" id="SM00739">
    <property type="entry name" value="KOW"/>
    <property type="match status" value="1"/>
</dbReference>
<dbReference type="SUPFAM" id="SSF50104">
    <property type="entry name" value="Translation proteins SH3-like domain"/>
    <property type="match status" value="1"/>
</dbReference>
<dbReference type="PROSITE" id="PS01108">
    <property type="entry name" value="RIBOSOMAL_L24"/>
    <property type="match status" value="1"/>
</dbReference>
<geneLocation type="chloroplast"/>
<organism>
    <name type="scientific">Porphyra purpurea</name>
    <name type="common">Red seaweed</name>
    <name type="synonym">Ulva purpurea</name>
    <dbReference type="NCBI Taxonomy" id="2787"/>
    <lineage>
        <taxon>Eukaryota</taxon>
        <taxon>Rhodophyta</taxon>
        <taxon>Bangiophyceae</taxon>
        <taxon>Bangiales</taxon>
        <taxon>Bangiaceae</taxon>
        <taxon>Porphyra</taxon>
    </lineage>
</organism>
<accession>P51303</accession>
<name>RK24_PORPU</name>
<reference key="1">
    <citation type="journal article" date="1995" name="Plant Mol. Biol. Rep.">
        <title>Complete nucleotide sequence of the Porphyra purpurea chloroplast genome.</title>
        <authorList>
            <person name="Reith M.E."/>
            <person name="Munholland J."/>
        </authorList>
    </citation>
    <scope>NUCLEOTIDE SEQUENCE [LARGE SCALE GENOMIC DNA]</scope>
    <source>
        <strain>Avonport</strain>
    </source>
</reference>
<keyword id="KW-0150">Chloroplast</keyword>
<keyword id="KW-0934">Plastid</keyword>
<keyword id="KW-0687">Ribonucleoprotein</keyword>
<keyword id="KW-0689">Ribosomal protein</keyword>
<keyword id="KW-0694">RNA-binding</keyword>
<keyword id="KW-0699">rRNA-binding</keyword>
<evidence type="ECO:0000250" key="1"/>
<evidence type="ECO:0000305" key="2"/>
<comment type="function">
    <text evidence="1">One of two assembly initiator proteins, it binds directly to the 5'-end of the 23S rRNA, where it nucleates assembly of the 50S subunit.</text>
</comment>
<comment type="subunit">
    <text evidence="1">Part of the 50S ribosomal subunit.</text>
</comment>
<comment type="subcellular location">
    <subcellularLocation>
        <location>Plastid</location>
        <location>Chloroplast</location>
    </subcellularLocation>
</comment>
<comment type="similarity">
    <text evidence="2">Belongs to the universal ribosomal protein uL24 family.</text>
</comment>